<comment type="function">
    <text evidence="2">Part of the gene cluster that mediates the biosynthesis of echinocandin B, a fungal lipidated cyclic hexapeptide that acts as an antifungal agent (PubMed:22998630). Linoleoyl-AMP, produced by the fatty-acyl-AMP ligase ecdI, is transferred to the initiation carrier domain (T0) of ecdA (PubMed:22998630). The linoleoyl-S-phosphopantetheinyl-T0 is sequentially extended with L-ornithine, L-threonine, L-proline, L-homotyrosine, L-threonine, and 4R-methyl-L-proline to form the linear hexapeptide (PubMed:22998630). Thereafter, the terminal condensation (C7) performs macrocyclization of the NRPS product and the cyclic scaffold is released from ecdA (PubMed:22998630). All six of the amino acid residues are hydroxylated, including 4R,5R-dihydroxy-L-ornithine, 4R-hydroxyl-L-proline, 3S,4S-dihydroxy-L-homotyrosine, and 3S-hydroxyl-4S-methyl-L-prolin (PubMed:22998630). In the pathway, all the hydroxylation reactions are proposed to occur following completion of the cyclic peptide, so the unhydroxylated precursor produced by ecdA will undergo six rounds of hydroxylation (PubMed:22998630). Five hydroxylase genes (ecdG, ecdH, ecdK, htyE and htyF) are embedded within the echinocandin B (ecd) and L-homotyrosine (hty) clusters (PubMed:22998630).</text>
</comment>
<comment type="pathway">
    <text evidence="4">Antifungal biosynthesis.</text>
</comment>
<comment type="biotechnology">
    <text evidence="2">Due to their effectiveness as antifungal agents, echinocandin derivatives can be used for the treatment of human invasive candidiasis (PubMed:22998630).</text>
</comment>
<proteinExistence type="evidence at protein level"/>
<feature type="chain" id="PRO_0000443842" description="Echinocandin B biosynthetic cluster protein J">
    <location>
        <begin position="1"/>
        <end position="668"/>
    </location>
</feature>
<feature type="region of interest" description="Disordered" evidence="1">
    <location>
        <begin position="1"/>
        <end position="20"/>
    </location>
</feature>
<feature type="region of interest" description="Disordered" evidence="1">
    <location>
        <begin position="92"/>
        <end position="113"/>
    </location>
</feature>
<feature type="region of interest" description="Disordered" evidence="1">
    <location>
        <begin position="224"/>
        <end position="322"/>
    </location>
</feature>
<feature type="region of interest" description="Disordered" evidence="1">
    <location>
        <begin position="330"/>
        <end position="349"/>
    </location>
</feature>
<feature type="region of interest" description="Disordered" evidence="1">
    <location>
        <begin position="483"/>
        <end position="506"/>
    </location>
</feature>
<feature type="compositionally biased region" description="Polar residues" evidence="1">
    <location>
        <begin position="96"/>
        <end position="106"/>
    </location>
</feature>
<feature type="compositionally biased region" description="Pro residues" evidence="1">
    <location>
        <begin position="264"/>
        <end position="275"/>
    </location>
</feature>
<feature type="compositionally biased region" description="Polar residues" evidence="1">
    <location>
        <begin position="311"/>
        <end position="322"/>
    </location>
</feature>
<feature type="compositionally biased region" description="Low complexity" evidence="1">
    <location>
        <begin position="484"/>
        <end position="494"/>
    </location>
</feature>
<feature type="compositionally biased region" description="Basic and acidic residues" evidence="1">
    <location>
        <begin position="495"/>
        <end position="505"/>
    </location>
</feature>
<organism>
    <name type="scientific">Aspergillus rugulosus</name>
    <name type="common">Emericella rugulosa</name>
    <dbReference type="NCBI Taxonomy" id="41736"/>
    <lineage>
        <taxon>Eukaryota</taxon>
        <taxon>Fungi</taxon>
        <taxon>Dikarya</taxon>
        <taxon>Ascomycota</taxon>
        <taxon>Pezizomycotina</taxon>
        <taxon>Eurotiomycetes</taxon>
        <taxon>Eurotiomycetidae</taxon>
        <taxon>Eurotiales</taxon>
        <taxon>Aspergillaceae</taxon>
        <taxon>Aspergillus</taxon>
        <taxon>Aspergillus subgen. Nidulantes</taxon>
    </lineage>
</organism>
<name>ECDJ_ASPRU</name>
<reference key="1">
    <citation type="journal article" date="2012" name="J. Am. Chem. Soc.">
        <title>Identification and characterization of the echinocandin B biosynthetic gene cluster from Emericella rugulosa NRRL 11440.</title>
        <authorList>
            <person name="Cacho R.A."/>
            <person name="Jiang W."/>
            <person name="Chooi Y.H."/>
            <person name="Walsh C.T."/>
            <person name="Tang Y."/>
        </authorList>
    </citation>
    <scope>NUCLEOTIDE SEQUENCE [GENOMIC DNA]</scope>
    <scope>FUNCTION</scope>
    <scope>PATHWAY</scope>
    <scope>BIOTECHNOLOGY</scope>
    <source>
        <strain>ATCC 58397 / NRRL 11440</strain>
    </source>
</reference>
<gene>
    <name evidence="3" type="primary">ecdJ</name>
</gene>
<protein>
    <recommendedName>
        <fullName evidence="3">Echinocandin B biosynthetic cluster protein J</fullName>
    </recommendedName>
</protein>
<sequence>MHFAESVQTPPPSRPSDQSLNQHVLDLGSWDQGCRDLMLVNWLCVDFRQRLLNVLYTSCQKNFNEARSLARERLLDLVQRIASSDNLHGALYTPPSLDSRSSATPPQNLPPTPDLVQCIRGCDEPFPPLSLPTPAQIDTQENERLMCTPEDITYHDRDSQVVAQARRRSPPGTGPAVLPPIAFDNHELPPGCSDFLNFDLLSDGEVFSIGTHAGVTSDVCDSMPLDHDLSEMELDPPPDATTTTTTTTVSSPNVHSTHHLAIPNPEPGTPTPPSPLAGTSLTRKPPGTPDSPSAASQRRQRQRRAAAHATYRSTPSPCQSADTHIGAENEVAEPAPPSPSTRWTHSIPTHLPSPDTVLATFTHHLGRGKQSIALLLTRLFYAIGSPDALSQLRDAVKLSREQTPAIIPVSSTNDLATTVKALDHLDSMTTLSHILRRYYLVRLLEHRTRFEQDHVTAKQAWRPPKRMLKYDCARVELIKNGGNCSSSSCSSSASKKNEEKREPPLKYRSKSQALADLMQMLYPDLKPAVAEGKDCVYSRKLTKLRNRLSCARNWYRFEQAFPGAILALIPCAGRFSVSIDQIEKLPSDTVQIFLDYLQEHRGVFSRCVSQTLGTGIFSVLARTSADAAPTFAFEKVEEEGFGDLLYDTDELVSLSIEYDRYCDLNSNA</sequence>
<evidence type="ECO:0000256" key="1">
    <source>
        <dbReference type="SAM" id="MobiDB-lite"/>
    </source>
</evidence>
<evidence type="ECO:0000269" key="2">
    <source>
    </source>
</evidence>
<evidence type="ECO:0000303" key="3">
    <source>
    </source>
</evidence>
<evidence type="ECO:0000305" key="4">
    <source>
    </source>
</evidence>
<dbReference type="EMBL" id="JX421684">
    <property type="protein sequence ID" value="AFT91381.1"/>
    <property type="molecule type" value="Genomic_DNA"/>
</dbReference>
<accession>K0DZ91</accession>